<dbReference type="EMBL" id="CU928161">
    <property type="protein sequence ID" value="CAR01470.1"/>
    <property type="molecule type" value="Genomic_DNA"/>
</dbReference>
<dbReference type="RefSeq" id="WP_001194731.1">
    <property type="nucleotide sequence ID" value="NC_011742.1"/>
</dbReference>
<dbReference type="SMR" id="B7MAM4"/>
<dbReference type="KEGG" id="ecz:ECS88_0105"/>
<dbReference type="HOGENOM" id="CLU_076303_0_0_6"/>
<dbReference type="Proteomes" id="UP000000747">
    <property type="component" value="Chromosome"/>
</dbReference>
<dbReference type="GO" id="GO:0032153">
    <property type="term" value="C:cell division site"/>
    <property type="evidence" value="ECO:0007669"/>
    <property type="project" value="TreeGrafter"/>
</dbReference>
<dbReference type="GO" id="GO:0005737">
    <property type="term" value="C:cytoplasm"/>
    <property type="evidence" value="ECO:0007669"/>
    <property type="project" value="UniProtKB-SubCell"/>
</dbReference>
<dbReference type="GO" id="GO:0000917">
    <property type="term" value="P:division septum assembly"/>
    <property type="evidence" value="ECO:0007669"/>
    <property type="project" value="UniProtKB-KW"/>
</dbReference>
<dbReference type="GO" id="GO:0043093">
    <property type="term" value="P:FtsZ-dependent cytokinesis"/>
    <property type="evidence" value="ECO:0007669"/>
    <property type="project" value="UniProtKB-UniRule"/>
</dbReference>
<dbReference type="FunFam" id="1.10.3900.10:FF:000001">
    <property type="entry name" value="Cell division protein ZapD"/>
    <property type="match status" value="1"/>
</dbReference>
<dbReference type="FunFam" id="2.60.440.10:FF:000001">
    <property type="entry name" value="Cell division protein ZapD"/>
    <property type="match status" value="1"/>
</dbReference>
<dbReference type="Gene3D" id="1.10.3900.10">
    <property type="entry name" value="YacF-like"/>
    <property type="match status" value="1"/>
</dbReference>
<dbReference type="Gene3D" id="2.60.440.10">
    <property type="entry name" value="YacF-like domains"/>
    <property type="match status" value="1"/>
</dbReference>
<dbReference type="HAMAP" id="MF_01092">
    <property type="entry name" value="ZapD"/>
    <property type="match status" value="1"/>
</dbReference>
<dbReference type="InterPro" id="IPR009777">
    <property type="entry name" value="ZapD"/>
</dbReference>
<dbReference type="InterPro" id="IPR027462">
    <property type="entry name" value="ZapD_C"/>
</dbReference>
<dbReference type="InterPro" id="IPR036268">
    <property type="entry name" value="ZapD_sf"/>
</dbReference>
<dbReference type="NCBIfam" id="NF003653">
    <property type="entry name" value="PRK05287.1-1"/>
    <property type="match status" value="1"/>
</dbReference>
<dbReference type="NCBIfam" id="NF003655">
    <property type="entry name" value="PRK05287.1-3"/>
    <property type="match status" value="1"/>
</dbReference>
<dbReference type="PANTHER" id="PTHR39455">
    <property type="entry name" value="CELL DIVISION PROTEIN ZAPD"/>
    <property type="match status" value="1"/>
</dbReference>
<dbReference type="PANTHER" id="PTHR39455:SF1">
    <property type="entry name" value="CELL DIVISION PROTEIN ZAPD"/>
    <property type="match status" value="1"/>
</dbReference>
<dbReference type="Pfam" id="PF07072">
    <property type="entry name" value="ZapD"/>
    <property type="match status" value="1"/>
</dbReference>
<dbReference type="SUPFAM" id="SSF160950">
    <property type="entry name" value="YacF-like"/>
    <property type="match status" value="1"/>
</dbReference>
<gene>
    <name evidence="1" type="primary">zapD</name>
    <name type="ordered locus">ECS88_0105</name>
</gene>
<protein>
    <recommendedName>
        <fullName evidence="1">Cell division protein ZapD</fullName>
    </recommendedName>
    <alternativeName>
        <fullName evidence="1">Z ring-associated protein D</fullName>
    </alternativeName>
</protein>
<evidence type="ECO:0000255" key="1">
    <source>
        <dbReference type="HAMAP-Rule" id="MF_01092"/>
    </source>
</evidence>
<sequence>MQTQVLFEHPLNEKMRTWLRIEFLIQQLTVNLPIVDHAGALHFFRNVSELLDVFERGEVRTELLKELDRQQRKLQTWIGVPGVDQSRIEALIQQLKAAGSVLISAPRIGQFLREDRLIALVRQRLSIPGGCCSFDLPTLHIWLHLPQAQRDSQVETWIASLNPLTQALTMVLDLIRQSAPFRKQTSLNGFYQDNGGDADLLRLNLSLDSQLYPQISGHKSRFAIRFMPLDSENGQVPERLDFELACC</sequence>
<proteinExistence type="inferred from homology"/>
<reference key="1">
    <citation type="journal article" date="2009" name="PLoS Genet.">
        <title>Organised genome dynamics in the Escherichia coli species results in highly diverse adaptive paths.</title>
        <authorList>
            <person name="Touchon M."/>
            <person name="Hoede C."/>
            <person name="Tenaillon O."/>
            <person name="Barbe V."/>
            <person name="Baeriswyl S."/>
            <person name="Bidet P."/>
            <person name="Bingen E."/>
            <person name="Bonacorsi S."/>
            <person name="Bouchier C."/>
            <person name="Bouvet O."/>
            <person name="Calteau A."/>
            <person name="Chiapello H."/>
            <person name="Clermont O."/>
            <person name="Cruveiller S."/>
            <person name="Danchin A."/>
            <person name="Diard M."/>
            <person name="Dossat C."/>
            <person name="Karoui M.E."/>
            <person name="Frapy E."/>
            <person name="Garry L."/>
            <person name="Ghigo J.M."/>
            <person name="Gilles A.M."/>
            <person name="Johnson J."/>
            <person name="Le Bouguenec C."/>
            <person name="Lescat M."/>
            <person name="Mangenot S."/>
            <person name="Martinez-Jehanne V."/>
            <person name="Matic I."/>
            <person name="Nassif X."/>
            <person name="Oztas S."/>
            <person name="Petit M.A."/>
            <person name="Pichon C."/>
            <person name="Rouy Z."/>
            <person name="Ruf C.S."/>
            <person name="Schneider D."/>
            <person name="Tourret J."/>
            <person name="Vacherie B."/>
            <person name="Vallenet D."/>
            <person name="Medigue C."/>
            <person name="Rocha E.P.C."/>
            <person name="Denamur E."/>
        </authorList>
    </citation>
    <scope>NUCLEOTIDE SEQUENCE [LARGE SCALE GENOMIC DNA]</scope>
    <source>
        <strain>S88 / ExPEC</strain>
    </source>
</reference>
<organism>
    <name type="scientific">Escherichia coli O45:K1 (strain S88 / ExPEC)</name>
    <dbReference type="NCBI Taxonomy" id="585035"/>
    <lineage>
        <taxon>Bacteria</taxon>
        <taxon>Pseudomonadati</taxon>
        <taxon>Pseudomonadota</taxon>
        <taxon>Gammaproteobacteria</taxon>
        <taxon>Enterobacterales</taxon>
        <taxon>Enterobacteriaceae</taxon>
        <taxon>Escherichia</taxon>
    </lineage>
</organism>
<name>ZAPD_ECO45</name>
<comment type="function">
    <text evidence="1">Cell division factor that enhances FtsZ-ring assembly. Directly interacts with FtsZ and promotes bundling of FtsZ protofilaments, with a reduction in FtsZ GTPase activity.</text>
</comment>
<comment type="subunit">
    <text evidence="1">Interacts with FtsZ.</text>
</comment>
<comment type="subcellular location">
    <subcellularLocation>
        <location evidence="1">Cytoplasm</location>
    </subcellularLocation>
    <text evidence="1">Localizes to mid-cell in an FtsZ-dependent manner.</text>
</comment>
<comment type="similarity">
    <text evidence="1">Belongs to the ZapD family.</text>
</comment>
<keyword id="KW-0131">Cell cycle</keyword>
<keyword id="KW-0132">Cell division</keyword>
<keyword id="KW-0963">Cytoplasm</keyword>
<keyword id="KW-1185">Reference proteome</keyword>
<keyword id="KW-0717">Septation</keyword>
<feature type="chain" id="PRO_1000136935" description="Cell division protein ZapD">
    <location>
        <begin position="1"/>
        <end position="247"/>
    </location>
</feature>
<accession>B7MAM4</accession>